<proteinExistence type="inferred from homology"/>
<sequence length="496" mass="55992">MAFEKTRQFLPPLHFVLFPFMAQGHMIPMVDIARILAQRGVTITIVTTPHNAARFKDVLNRAIQSGLHIRVEHVKFPFQEAGLQEGQENVDFLDSMELMVHFFKAVNMLENPVMKLMEEMKPKPSCLISDFCLPYTSKIAKRFNIPKIVFHGVSCFCLLSMHILHRNHNILHALKSDKEYFLVPSFPDRVEFTKLQVTVKTNFSGDWKEIMDEQVDADDTSYGVIVNTFQDLESAYVKNYTEARAGKVWSIGPVSLCNKVGEDKAERGNKAAIDQDECIKWLDSKDVESVLYVCLGSICNLPLAQLRELGLGLEATKRPFIWVIRGGGKYHELAEWILESGFEERTKERSLLIKGWSPQMLILSHPAVGGFLTHCGWNSTLEGITSGVPLITWPLFGDQFCNQKLIVQVLKAGVSVGVEEVMKWGEEESIGVLVDKEGVKKAVDEIMGESDEAKERRKRVRELGELAHKAVEEGGSSHSNIIFLLQDIMQQVESKS</sequence>
<dbReference type="EC" id="2.4.1.-"/>
<dbReference type="EMBL" id="AC006282">
    <property type="protein sequence ID" value="AAD20152.1"/>
    <property type="molecule type" value="Genomic_DNA"/>
</dbReference>
<dbReference type="EMBL" id="CP002685">
    <property type="protein sequence ID" value="AEC09295.1"/>
    <property type="molecule type" value="Genomic_DNA"/>
</dbReference>
<dbReference type="PIR" id="D84784">
    <property type="entry name" value="D84784"/>
</dbReference>
<dbReference type="RefSeq" id="NP_181214.1">
    <property type="nucleotide sequence ID" value="NM_129231.3"/>
</dbReference>
<dbReference type="SMR" id="Q9ZQ98"/>
<dbReference type="BioGRID" id="3592">
    <property type="interactions" value="1"/>
</dbReference>
<dbReference type="FunCoup" id="Q9ZQ98">
    <property type="interactions" value="113"/>
</dbReference>
<dbReference type="IntAct" id="Q9ZQ98">
    <property type="interactions" value="1"/>
</dbReference>
<dbReference type="STRING" id="3702.Q9ZQ98"/>
<dbReference type="CAZy" id="GT1">
    <property type="family name" value="Glycosyltransferase Family 1"/>
</dbReference>
<dbReference type="PaxDb" id="3702-AT2G36760.1"/>
<dbReference type="ProteomicsDB" id="242591"/>
<dbReference type="EnsemblPlants" id="AT2G36760.1">
    <property type="protein sequence ID" value="AT2G36760.1"/>
    <property type="gene ID" value="AT2G36760"/>
</dbReference>
<dbReference type="GeneID" id="818248"/>
<dbReference type="Gramene" id="AT2G36760.1">
    <property type="protein sequence ID" value="AT2G36760.1"/>
    <property type="gene ID" value="AT2G36760"/>
</dbReference>
<dbReference type="KEGG" id="ath:AT2G36760"/>
<dbReference type="Araport" id="AT2G36760"/>
<dbReference type="TAIR" id="AT2G36760">
    <property type="gene designation" value="UGT73C2"/>
</dbReference>
<dbReference type="eggNOG" id="KOG1192">
    <property type="taxonomic scope" value="Eukaryota"/>
</dbReference>
<dbReference type="HOGENOM" id="CLU_001724_2_2_1"/>
<dbReference type="InParanoid" id="Q9ZQ98"/>
<dbReference type="OMA" id="IGTIKCP"/>
<dbReference type="PhylomeDB" id="Q9ZQ98"/>
<dbReference type="BioCyc" id="ARA:AT2G36760-MONOMER"/>
<dbReference type="PRO" id="PR:Q9ZQ98"/>
<dbReference type="Proteomes" id="UP000006548">
    <property type="component" value="Chromosome 2"/>
</dbReference>
<dbReference type="ExpressionAtlas" id="Q9ZQ98">
    <property type="expression patterns" value="baseline and differential"/>
</dbReference>
<dbReference type="GO" id="GO:0046527">
    <property type="term" value="F:glucosyltransferase activity"/>
    <property type="evidence" value="ECO:0007669"/>
    <property type="project" value="UniProtKB-ARBA"/>
</dbReference>
<dbReference type="GO" id="GO:0008194">
    <property type="term" value="F:UDP-glycosyltransferase activity"/>
    <property type="evidence" value="ECO:0007669"/>
    <property type="project" value="InterPro"/>
</dbReference>
<dbReference type="CDD" id="cd03784">
    <property type="entry name" value="GT1_Gtf-like"/>
    <property type="match status" value="1"/>
</dbReference>
<dbReference type="FunFam" id="3.40.50.2000:FF:000047">
    <property type="entry name" value="Glycosyltransferase"/>
    <property type="match status" value="1"/>
</dbReference>
<dbReference type="FunFam" id="3.40.50.2000:FF:000071">
    <property type="entry name" value="Glycosyltransferase"/>
    <property type="match status" value="1"/>
</dbReference>
<dbReference type="Gene3D" id="3.40.50.2000">
    <property type="entry name" value="Glycogen Phosphorylase B"/>
    <property type="match status" value="2"/>
</dbReference>
<dbReference type="InterPro" id="IPR002213">
    <property type="entry name" value="UDP_glucos_trans"/>
</dbReference>
<dbReference type="InterPro" id="IPR035595">
    <property type="entry name" value="UDP_glycos_trans_CS"/>
</dbReference>
<dbReference type="PANTHER" id="PTHR48047">
    <property type="entry name" value="GLYCOSYLTRANSFERASE"/>
    <property type="match status" value="1"/>
</dbReference>
<dbReference type="PANTHER" id="PTHR48047:SF205">
    <property type="entry name" value="UDP-GLYCOSYLTRANSFERASE 73C2"/>
    <property type="match status" value="1"/>
</dbReference>
<dbReference type="Pfam" id="PF00201">
    <property type="entry name" value="UDPGT"/>
    <property type="match status" value="1"/>
</dbReference>
<dbReference type="SUPFAM" id="SSF53756">
    <property type="entry name" value="UDP-Glycosyltransferase/glycogen phosphorylase"/>
    <property type="match status" value="1"/>
</dbReference>
<dbReference type="PROSITE" id="PS00375">
    <property type="entry name" value="UDPGT"/>
    <property type="match status" value="1"/>
</dbReference>
<gene>
    <name type="primary">UGT73C2</name>
    <name type="ordered locus">At2g36760</name>
    <name type="ORF">F13K3.16</name>
</gene>
<protein>
    <recommendedName>
        <fullName>UDP-glycosyltransferase 73C2</fullName>
        <ecNumber>2.4.1.-</ecNumber>
    </recommendedName>
</protein>
<name>U73C2_ARATH</name>
<keyword id="KW-0328">Glycosyltransferase</keyword>
<keyword id="KW-1185">Reference proteome</keyword>
<keyword id="KW-0808">Transferase</keyword>
<evidence type="ECO:0000250" key="1"/>
<evidence type="ECO:0000305" key="2"/>
<accession>Q9ZQ98</accession>
<organism>
    <name type="scientific">Arabidopsis thaliana</name>
    <name type="common">Mouse-ear cress</name>
    <dbReference type="NCBI Taxonomy" id="3702"/>
    <lineage>
        <taxon>Eukaryota</taxon>
        <taxon>Viridiplantae</taxon>
        <taxon>Streptophyta</taxon>
        <taxon>Embryophyta</taxon>
        <taxon>Tracheophyta</taxon>
        <taxon>Spermatophyta</taxon>
        <taxon>Magnoliopsida</taxon>
        <taxon>eudicotyledons</taxon>
        <taxon>Gunneridae</taxon>
        <taxon>Pentapetalae</taxon>
        <taxon>rosids</taxon>
        <taxon>malvids</taxon>
        <taxon>Brassicales</taxon>
        <taxon>Brassicaceae</taxon>
        <taxon>Camelineae</taxon>
        <taxon>Arabidopsis</taxon>
    </lineage>
</organism>
<reference key="1">
    <citation type="journal article" date="1999" name="Nature">
        <title>Sequence and analysis of chromosome 2 of the plant Arabidopsis thaliana.</title>
        <authorList>
            <person name="Lin X."/>
            <person name="Kaul S."/>
            <person name="Rounsley S.D."/>
            <person name="Shea T.P."/>
            <person name="Benito M.-I."/>
            <person name="Town C.D."/>
            <person name="Fujii C.Y."/>
            <person name="Mason T.M."/>
            <person name="Bowman C.L."/>
            <person name="Barnstead M.E."/>
            <person name="Feldblyum T.V."/>
            <person name="Buell C.R."/>
            <person name="Ketchum K.A."/>
            <person name="Lee J.J."/>
            <person name="Ronning C.M."/>
            <person name="Koo H.L."/>
            <person name="Moffat K.S."/>
            <person name="Cronin L.A."/>
            <person name="Shen M."/>
            <person name="Pai G."/>
            <person name="Van Aken S."/>
            <person name="Umayam L."/>
            <person name="Tallon L.J."/>
            <person name="Gill J.E."/>
            <person name="Adams M.D."/>
            <person name="Carrera A.J."/>
            <person name="Creasy T.H."/>
            <person name="Goodman H.M."/>
            <person name="Somerville C.R."/>
            <person name="Copenhaver G.P."/>
            <person name="Preuss D."/>
            <person name="Nierman W.C."/>
            <person name="White O."/>
            <person name="Eisen J.A."/>
            <person name="Salzberg S.L."/>
            <person name="Fraser C.M."/>
            <person name="Venter J.C."/>
        </authorList>
    </citation>
    <scope>NUCLEOTIDE SEQUENCE [LARGE SCALE GENOMIC DNA]</scope>
    <source>
        <strain>cv. Columbia</strain>
    </source>
</reference>
<reference key="2">
    <citation type="journal article" date="2017" name="Plant J.">
        <title>Araport11: a complete reannotation of the Arabidopsis thaliana reference genome.</title>
        <authorList>
            <person name="Cheng C.Y."/>
            <person name="Krishnakumar V."/>
            <person name="Chan A.P."/>
            <person name="Thibaud-Nissen F."/>
            <person name="Schobel S."/>
            <person name="Town C.D."/>
        </authorList>
    </citation>
    <scope>GENOME REANNOTATION</scope>
    <source>
        <strain>cv. Columbia</strain>
    </source>
</reference>
<reference key="3">
    <citation type="journal article" date="2001" name="J. Biol. Chem.">
        <title>Phylogenetic analysis of the UDP-glycosyltransferase multigene family of Arabidopsis thaliana.</title>
        <authorList>
            <person name="Li Y."/>
            <person name="Baldauf S."/>
            <person name="Lim E.K."/>
            <person name="Bowles D.J."/>
        </authorList>
    </citation>
    <scope>GENE FAMILY</scope>
</reference>
<comment type="similarity">
    <text evidence="2">Belongs to the UDP-glycosyltransferase family.</text>
</comment>
<feature type="chain" id="PRO_0000409076" description="UDP-glycosyltransferase 73C2">
    <location>
        <begin position="1"/>
        <end position="496"/>
    </location>
</feature>
<feature type="binding site" evidence="1">
    <location>
        <position position="297"/>
    </location>
    <ligand>
        <name>UDP-alpha-D-glucose</name>
        <dbReference type="ChEBI" id="CHEBI:58885"/>
    </ligand>
</feature>
<feature type="binding site" evidence="1">
    <location>
        <begin position="357"/>
        <end position="359"/>
    </location>
    <ligand>
        <name>UDP-alpha-D-glucose</name>
        <dbReference type="ChEBI" id="CHEBI:58885"/>
    </ligand>
</feature>
<feature type="binding site" evidence="1">
    <location>
        <begin position="374"/>
        <end position="382"/>
    </location>
    <ligand>
        <name>UDP-alpha-D-glucose</name>
        <dbReference type="ChEBI" id="CHEBI:58885"/>
    </ligand>
</feature>
<feature type="binding site" evidence="1">
    <location>
        <begin position="396"/>
        <end position="399"/>
    </location>
    <ligand>
        <name>UDP-alpha-D-glucose</name>
        <dbReference type="ChEBI" id="CHEBI:58885"/>
    </ligand>
</feature>